<evidence type="ECO:0000255" key="1">
    <source>
        <dbReference type="HAMAP-Rule" id="MF_04065"/>
    </source>
</evidence>
<evidence type="ECO:0000256" key="2">
    <source>
        <dbReference type="SAM" id="MobiDB-lite"/>
    </source>
</evidence>
<accession>P16507</accession>
<gene>
    <name evidence="1" type="primary">PB1</name>
</gene>
<keyword id="KW-1262">Eukaryotic host gene expression shutoff by virus</keyword>
<keyword id="KW-1191">Eukaryotic host transcription shutoff by virus</keyword>
<keyword id="KW-1035">Host cytoplasm</keyword>
<keyword id="KW-1190">Host gene expression shutoff by virus</keyword>
<keyword id="KW-1048">Host nucleus</keyword>
<keyword id="KW-0945">Host-virus interaction</keyword>
<keyword id="KW-1104">Inhibition of host RNA polymerase II by virus</keyword>
<keyword id="KW-0547">Nucleotide-binding</keyword>
<keyword id="KW-0548">Nucleotidyltransferase</keyword>
<keyword id="KW-0597">Phosphoprotein</keyword>
<keyword id="KW-0696">RNA-directed RNA polymerase</keyword>
<keyword id="KW-0808">Transferase</keyword>
<keyword id="KW-0693">Viral RNA replication</keyword>
<keyword id="KW-1195">Viral transcription</keyword>
<comment type="function">
    <text evidence="1">RNA-dependent RNA polymerase which is responsible for replication and transcription of virus RNA segments. The transcription of viral mRNAs occurs by a unique mechanism called cap-snatching. 5' methylated caps of cellular mRNAs are cleaved after 10-13 nucleotides by PA. In turn, these short capped RNAs are used as primers by PB1 for transcription of viral mRNAs. During virus replication, PB1 initiates RNA synthesis and copy vRNA into complementary RNA (cRNA) which in turn serves as a template for the production of more vRNAs.</text>
</comment>
<comment type="catalytic activity">
    <reaction evidence="1">
        <text>RNA(n) + a ribonucleoside 5'-triphosphate = RNA(n+1) + diphosphate</text>
        <dbReference type="Rhea" id="RHEA:21248"/>
        <dbReference type="Rhea" id="RHEA-COMP:14527"/>
        <dbReference type="Rhea" id="RHEA-COMP:17342"/>
        <dbReference type="ChEBI" id="CHEBI:33019"/>
        <dbReference type="ChEBI" id="CHEBI:61557"/>
        <dbReference type="ChEBI" id="CHEBI:140395"/>
        <dbReference type="EC" id="2.7.7.48"/>
    </reaction>
</comment>
<comment type="subunit">
    <text evidence="1">Influenza RNA polymerase is composed of three subunits: PB1, PB2 and PA. Interacts (via N-terminus) with PA (via C-terminus). Interacts (via C-terminus) with PB2 (via N-terminus); this interaction is essential for transcription initiation.</text>
</comment>
<comment type="subcellular location">
    <subcellularLocation>
        <location evidence="1">Host nucleus</location>
    </subcellularLocation>
    <subcellularLocation>
        <location evidence="1">Host cytoplasm</location>
    </subcellularLocation>
</comment>
<comment type="PTM">
    <text evidence="1">Phosphorylated by host PRKCA.</text>
</comment>
<comment type="similarity">
    <text evidence="1">Belongs to the influenza viruses polymerase PB1 family.</text>
</comment>
<sequence length="757" mass="86349">MDVNPTLLFLKVPAQNAISTTFPYTGDPPYSHGTGTGYTMDTVNRTHQYSEKGKWTTNTETGAPQLNPIDGPLPEDNEPSGYAQTDCVLEAMAFLEESHPGIFENSCLETIEVVQQTRVDKLTQGRQTYDWTLNRNQPAATALANTIEVFRSNGLTANESGRLIDFLKDVMESMDKEEIEITTHFQRKRRVRDNMTKKMVTQRTIGKKKQRVNKRSYLIRALTLNTMTKDAERGKLKRRAIATPGMQIRGFVYFVETLARSICEKLEQSGLPVGGNEKKAKLANVVRKMMTNSQDTELSFTITGDNTKWNENQNPRMFLAMITYITKNQPEWFRNILSIAPIMFSNKMARLGKGYMFESKRMKLRTQIPAEMLASIDLKYFNESTRKKIEKIRPLLIDGTASLSPGMMMGMFNMLSTVLGVSILNLGQKKYTKTTYWWDGLQSSDDFALIVNAPNHEGIQAGVDRFYRTCKLVGINMSKKKSYINKTGTFEFTSFFYRYGFVANFSMELPSFGVSGINESADMSIGVTVIKNNMINNDLGPATAQMALQLFIKDYRYTYRCHRGDTQIQTRRSFELKKLWDQTQSKAGLLVSDGGPNLYNIRNLHIPEVCLKWELMDEDYQGRLCNPLNPFVSHKEIESVNNAVVMPAHGPAKSMEYDAVATTHSWIPKRNRSILNTSQRGILEDEQMYQKCCNLFEKFFPSSSYRRPVGISSMVEAMVSRARIDARIDFESGRIKKEEFSEIMKICSTIEELRRQK</sequence>
<proteinExistence type="inferred from homology"/>
<organismHost>
    <name type="scientific">Aves</name>
    <dbReference type="NCBI Taxonomy" id="8782"/>
</organismHost>
<organismHost>
    <name type="scientific">Cetacea</name>
    <name type="common">whales</name>
    <dbReference type="NCBI Taxonomy" id="9721"/>
</organismHost>
<organismHost>
    <name type="scientific">Homo sapiens</name>
    <name type="common">Human</name>
    <dbReference type="NCBI Taxonomy" id="9606"/>
</organismHost>
<organismHost>
    <name type="scientific">Phocidae</name>
    <name type="common">true seals</name>
    <dbReference type="NCBI Taxonomy" id="9709"/>
</organismHost>
<organismHost>
    <name type="scientific">Sus scrofa</name>
    <name type="common">Pig</name>
    <dbReference type="NCBI Taxonomy" id="9823"/>
</organismHost>
<feature type="chain" id="PRO_0000078761" description="RNA-directed RNA polymerase catalytic subunit">
    <location>
        <begin position="1"/>
        <end position="757"/>
    </location>
</feature>
<feature type="domain" description="RdRp catalytic" evidence="1">
    <location>
        <begin position="286"/>
        <end position="483"/>
    </location>
</feature>
<feature type="region of interest" description="Disordered" evidence="2">
    <location>
        <begin position="50"/>
        <end position="82"/>
    </location>
</feature>
<feature type="region of interest" description="Promoter-binding site" evidence="1">
    <location>
        <begin position="249"/>
        <end position="256"/>
    </location>
</feature>
<feature type="short sequence motif" description="Nuclear localization signal" evidence="1">
    <location>
        <begin position="187"/>
        <end position="195"/>
    </location>
</feature>
<feature type="short sequence motif" description="Nuclear localization signal" evidence="1">
    <location>
        <begin position="203"/>
        <end position="216"/>
    </location>
</feature>
<feature type="compositionally biased region" description="Polar residues" evidence="2">
    <location>
        <begin position="55"/>
        <end position="64"/>
    </location>
</feature>
<name>RDRP_I88A3</name>
<dbReference type="EC" id="2.7.7.48" evidence="1"/>
<dbReference type="EMBL" id="M25936">
    <property type="protein sequence ID" value="AAA43645.1"/>
    <property type="molecule type" value="Genomic_RNA"/>
</dbReference>
<dbReference type="SMR" id="P16507"/>
<dbReference type="Proteomes" id="UP000149784">
    <property type="component" value="Genome"/>
</dbReference>
<dbReference type="GO" id="GO:0030430">
    <property type="term" value="C:host cell cytoplasm"/>
    <property type="evidence" value="ECO:0007669"/>
    <property type="project" value="UniProtKB-SubCell"/>
</dbReference>
<dbReference type="GO" id="GO:0042025">
    <property type="term" value="C:host cell nucleus"/>
    <property type="evidence" value="ECO:0007669"/>
    <property type="project" value="UniProtKB-SubCell"/>
</dbReference>
<dbReference type="GO" id="GO:0000166">
    <property type="term" value="F:nucleotide binding"/>
    <property type="evidence" value="ECO:0007669"/>
    <property type="project" value="UniProtKB-UniRule"/>
</dbReference>
<dbReference type="GO" id="GO:0003723">
    <property type="term" value="F:RNA binding"/>
    <property type="evidence" value="ECO:0007669"/>
    <property type="project" value="InterPro"/>
</dbReference>
<dbReference type="GO" id="GO:0003968">
    <property type="term" value="F:RNA-directed RNA polymerase activity"/>
    <property type="evidence" value="ECO:0007669"/>
    <property type="project" value="UniProtKB-UniRule"/>
</dbReference>
<dbReference type="GO" id="GO:0006351">
    <property type="term" value="P:DNA-templated transcription"/>
    <property type="evidence" value="ECO:0007669"/>
    <property type="project" value="UniProtKB-UniRule"/>
</dbReference>
<dbReference type="GO" id="GO:0039657">
    <property type="term" value="P:symbiont-mediated suppression of host gene expression"/>
    <property type="evidence" value="ECO:0007669"/>
    <property type="project" value="UniProtKB-KW"/>
</dbReference>
<dbReference type="GO" id="GO:0039523">
    <property type="term" value="P:symbiont-mediated suppression of host mRNA transcription via inhibition of RNA polymerase II activity"/>
    <property type="evidence" value="ECO:0007669"/>
    <property type="project" value="UniProtKB-UniRule"/>
</dbReference>
<dbReference type="GO" id="GO:0039694">
    <property type="term" value="P:viral RNA genome replication"/>
    <property type="evidence" value="ECO:0007669"/>
    <property type="project" value="UniProtKB-UniRule"/>
</dbReference>
<dbReference type="GO" id="GO:0019083">
    <property type="term" value="P:viral transcription"/>
    <property type="evidence" value="ECO:0007669"/>
    <property type="project" value="UniProtKB-KW"/>
</dbReference>
<dbReference type="Gene3D" id="6.10.140.720">
    <property type="match status" value="1"/>
</dbReference>
<dbReference type="HAMAP" id="MF_04065">
    <property type="entry name" value="INFV_RDRP"/>
    <property type="match status" value="1"/>
</dbReference>
<dbReference type="InterPro" id="IPR007099">
    <property type="entry name" value="RNA-dir_pol_NSvirus"/>
</dbReference>
<dbReference type="InterPro" id="IPR001407">
    <property type="entry name" value="RNA_pol_PB1_influenza"/>
</dbReference>
<dbReference type="Pfam" id="PF00602">
    <property type="entry name" value="Flu_PB1"/>
    <property type="match status" value="1"/>
</dbReference>
<dbReference type="PIRSF" id="PIRSF000827">
    <property type="entry name" value="RdRPol_OMV"/>
    <property type="match status" value="1"/>
</dbReference>
<dbReference type="PROSITE" id="PS50525">
    <property type="entry name" value="RDRP_SSRNA_NEG_SEG"/>
    <property type="match status" value="1"/>
</dbReference>
<organism>
    <name type="scientific">Influenza A virus (strain A/Memphis/8/1988 H3N2)</name>
    <dbReference type="NCBI Taxonomy" id="383588"/>
    <lineage>
        <taxon>Viruses</taxon>
        <taxon>Riboviria</taxon>
        <taxon>Orthornavirae</taxon>
        <taxon>Negarnaviricota</taxon>
        <taxon>Polyploviricotina</taxon>
        <taxon>Insthoviricetes</taxon>
        <taxon>Articulavirales</taxon>
        <taxon>Orthomyxoviridae</taxon>
        <taxon>Alphainfluenzavirus</taxon>
        <taxon>Alphainfluenzavirus influenzae</taxon>
        <taxon>Influenza A virus</taxon>
    </lineage>
</organism>
<protein>
    <recommendedName>
        <fullName evidence="1">RNA-directed RNA polymerase catalytic subunit</fullName>
        <ecNumber evidence="1">2.7.7.48</ecNumber>
    </recommendedName>
    <alternativeName>
        <fullName evidence="1">Polymerase basic protein 1</fullName>
        <shortName evidence="1">PB1</shortName>
    </alternativeName>
    <alternativeName>
        <fullName evidence="1">RNA-directed RNA polymerase subunit P1</fullName>
    </alternativeName>
</protein>
<reference key="1">
    <citation type="journal article" date="1989" name="J. Virol.">
        <title>Avian-to-human transmission of the PB1 gene of influenza A viruses in the 1957 and 1968 pandemics.</title>
        <authorList>
            <person name="Kawaoka Y."/>
            <person name="Krauss S."/>
            <person name="Webster R.G."/>
        </authorList>
    </citation>
    <scope>NUCLEOTIDE SEQUENCE [GENOMIC RNA]</scope>
</reference>